<sequence>MTAPLKAIDGSADLPALMNDLASRARAAARVLALAPAAQKNRALEAMERLIRARVDTIIAANAEDVVEAKAAGITSSFLDRLTLTPARVAAMADGIAAVREVADPIGIVTESWQRPNGMTIERVRVPLGVIGVIFESRPNVAADAGVLCLKSGNAVILRGGSDSFRSCRAIHECLVEGLREAGLPDAAITLVPTRDRAAVGLLLSGLNGGVDVIVPRGGKNLVARVEAEARVPVFAHLEGVNHVYVDGAADLEMAKSIVLNAKMRRTGVCGAAETLLIDRASQDKIKPLVDTLINAGCEVRGDDAVRAADARVKPASNEDWDTEYLDAVIAAKVVDGVEGAIAHIQAHGSHHTDAIVTADVAAADKFLNEVDSAIVLHNASTQFADGGEFGFGAEIGIATGKFHARGPVGVEQLTSFKYRIHGTGQTRP</sequence>
<keyword id="KW-0028">Amino-acid biosynthesis</keyword>
<keyword id="KW-0963">Cytoplasm</keyword>
<keyword id="KW-0521">NADP</keyword>
<keyword id="KW-0560">Oxidoreductase</keyword>
<keyword id="KW-0641">Proline biosynthesis</keyword>
<keyword id="KW-1185">Reference proteome</keyword>
<feature type="chain" id="PRO_1000049937" description="Gamma-glutamyl phosphate reductase">
    <location>
        <begin position="1"/>
        <end position="429"/>
    </location>
</feature>
<organism>
    <name type="scientific">Bradyrhizobium sp. (strain BTAi1 / ATCC BAA-1182)</name>
    <dbReference type="NCBI Taxonomy" id="288000"/>
    <lineage>
        <taxon>Bacteria</taxon>
        <taxon>Pseudomonadati</taxon>
        <taxon>Pseudomonadota</taxon>
        <taxon>Alphaproteobacteria</taxon>
        <taxon>Hyphomicrobiales</taxon>
        <taxon>Nitrobacteraceae</taxon>
        <taxon>Bradyrhizobium</taxon>
    </lineage>
</organism>
<comment type="function">
    <text evidence="1">Catalyzes the NADPH-dependent reduction of L-glutamate 5-phosphate into L-glutamate 5-semialdehyde and phosphate. The product spontaneously undergoes cyclization to form 1-pyrroline-5-carboxylate.</text>
</comment>
<comment type="catalytic activity">
    <reaction evidence="1">
        <text>L-glutamate 5-semialdehyde + phosphate + NADP(+) = L-glutamyl 5-phosphate + NADPH + H(+)</text>
        <dbReference type="Rhea" id="RHEA:19541"/>
        <dbReference type="ChEBI" id="CHEBI:15378"/>
        <dbReference type="ChEBI" id="CHEBI:43474"/>
        <dbReference type="ChEBI" id="CHEBI:57783"/>
        <dbReference type="ChEBI" id="CHEBI:58066"/>
        <dbReference type="ChEBI" id="CHEBI:58274"/>
        <dbReference type="ChEBI" id="CHEBI:58349"/>
        <dbReference type="EC" id="1.2.1.41"/>
    </reaction>
</comment>
<comment type="pathway">
    <text evidence="1">Amino-acid biosynthesis; L-proline biosynthesis; L-glutamate 5-semialdehyde from L-glutamate: step 2/2.</text>
</comment>
<comment type="subcellular location">
    <subcellularLocation>
        <location evidence="1">Cytoplasm</location>
    </subcellularLocation>
</comment>
<comment type="similarity">
    <text evidence="1">Belongs to the gamma-glutamyl phosphate reductase family.</text>
</comment>
<name>PROA_BRASB</name>
<dbReference type="EC" id="1.2.1.41" evidence="1"/>
<dbReference type="EMBL" id="CP000494">
    <property type="protein sequence ID" value="ABQ32705.1"/>
    <property type="molecule type" value="Genomic_DNA"/>
</dbReference>
<dbReference type="RefSeq" id="WP_012040758.1">
    <property type="nucleotide sequence ID" value="NC_009485.1"/>
</dbReference>
<dbReference type="SMR" id="A5E961"/>
<dbReference type="STRING" id="288000.BBta_0419"/>
<dbReference type="KEGG" id="bbt:BBta_0419"/>
<dbReference type="eggNOG" id="COG0014">
    <property type="taxonomic scope" value="Bacteria"/>
</dbReference>
<dbReference type="HOGENOM" id="CLU_030231_0_0_5"/>
<dbReference type="OrthoDB" id="9809970at2"/>
<dbReference type="UniPathway" id="UPA00098">
    <property type="reaction ID" value="UER00360"/>
</dbReference>
<dbReference type="Proteomes" id="UP000000246">
    <property type="component" value="Chromosome"/>
</dbReference>
<dbReference type="GO" id="GO:0005737">
    <property type="term" value="C:cytoplasm"/>
    <property type="evidence" value="ECO:0007669"/>
    <property type="project" value="UniProtKB-SubCell"/>
</dbReference>
<dbReference type="GO" id="GO:0004350">
    <property type="term" value="F:glutamate-5-semialdehyde dehydrogenase activity"/>
    <property type="evidence" value="ECO:0007669"/>
    <property type="project" value="UniProtKB-UniRule"/>
</dbReference>
<dbReference type="GO" id="GO:0050661">
    <property type="term" value="F:NADP binding"/>
    <property type="evidence" value="ECO:0007669"/>
    <property type="project" value="InterPro"/>
</dbReference>
<dbReference type="GO" id="GO:0055129">
    <property type="term" value="P:L-proline biosynthetic process"/>
    <property type="evidence" value="ECO:0007669"/>
    <property type="project" value="UniProtKB-UniRule"/>
</dbReference>
<dbReference type="CDD" id="cd07079">
    <property type="entry name" value="ALDH_F18-19_ProA-GPR"/>
    <property type="match status" value="1"/>
</dbReference>
<dbReference type="FunFam" id="3.40.309.10:FF:000006">
    <property type="entry name" value="Gamma-glutamyl phosphate reductase"/>
    <property type="match status" value="1"/>
</dbReference>
<dbReference type="Gene3D" id="3.40.605.10">
    <property type="entry name" value="Aldehyde Dehydrogenase, Chain A, domain 1"/>
    <property type="match status" value="1"/>
</dbReference>
<dbReference type="Gene3D" id="3.40.309.10">
    <property type="entry name" value="Aldehyde Dehydrogenase, Chain A, domain 2"/>
    <property type="match status" value="1"/>
</dbReference>
<dbReference type="HAMAP" id="MF_00412">
    <property type="entry name" value="ProA"/>
    <property type="match status" value="1"/>
</dbReference>
<dbReference type="InterPro" id="IPR016161">
    <property type="entry name" value="Ald_DH/histidinol_DH"/>
</dbReference>
<dbReference type="InterPro" id="IPR016163">
    <property type="entry name" value="Ald_DH_C"/>
</dbReference>
<dbReference type="InterPro" id="IPR016162">
    <property type="entry name" value="Ald_DH_N"/>
</dbReference>
<dbReference type="InterPro" id="IPR015590">
    <property type="entry name" value="Aldehyde_DH_dom"/>
</dbReference>
<dbReference type="InterPro" id="IPR020593">
    <property type="entry name" value="G-glutamylP_reductase_CS"/>
</dbReference>
<dbReference type="InterPro" id="IPR012134">
    <property type="entry name" value="Glu-5-SA_DH"/>
</dbReference>
<dbReference type="InterPro" id="IPR000965">
    <property type="entry name" value="GPR_dom"/>
</dbReference>
<dbReference type="NCBIfam" id="NF001221">
    <property type="entry name" value="PRK00197.1"/>
    <property type="match status" value="1"/>
</dbReference>
<dbReference type="NCBIfam" id="TIGR00407">
    <property type="entry name" value="proA"/>
    <property type="match status" value="1"/>
</dbReference>
<dbReference type="PANTHER" id="PTHR11063:SF8">
    <property type="entry name" value="DELTA-1-PYRROLINE-5-CARBOXYLATE SYNTHASE"/>
    <property type="match status" value="1"/>
</dbReference>
<dbReference type="PANTHER" id="PTHR11063">
    <property type="entry name" value="GLUTAMATE SEMIALDEHYDE DEHYDROGENASE"/>
    <property type="match status" value="1"/>
</dbReference>
<dbReference type="Pfam" id="PF00171">
    <property type="entry name" value="Aldedh"/>
    <property type="match status" value="1"/>
</dbReference>
<dbReference type="PIRSF" id="PIRSF000151">
    <property type="entry name" value="GPR"/>
    <property type="match status" value="1"/>
</dbReference>
<dbReference type="SUPFAM" id="SSF53720">
    <property type="entry name" value="ALDH-like"/>
    <property type="match status" value="1"/>
</dbReference>
<dbReference type="PROSITE" id="PS01223">
    <property type="entry name" value="PROA"/>
    <property type="match status" value="1"/>
</dbReference>
<reference key="1">
    <citation type="journal article" date="2007" name="Science">
        <title>Legumes symbioses: absence of nod genes in photosynthetic bradyrhizobia.</title>
        <authorList>
            <person name="Giraud E."/>
            <person name="Moulin L."/>
            <person name="Vallenet D."/>
            <person name="Barbe V."/>
            <person name="Cytryn E."/>
            <person name="Avarre J.-C."/>
            <person name="Jaubert M."/>
            <person name="Simon D."/>
            <person name="Cartieaux F."/>
            <person name="Prin Y."/>
            <person name="Bena G."/>
            <person name="Hannibal L."/>
            <person name="Fardoux J."/>
            <person name="Kojadinovic M."/>
            <person name="Vuillet L."/>
            <person name="Lajus A."/>
            <person name="Cruveiller S."/>
            <person name="Rouy Z."/>
            <person name="Mangenot S."/>
            <person name="Segurens B."/>
            <person name="Dossat C."/>
            <person name="Franck W.L."/>
            <person name="Chang W.-S."/>
            <person name="Saunders E."/>
            <person name="Bruce D."/>
            <person name="Richardson P."/>
            <person name="Normand P."/>
            <person name="Dreyfus B."/>
            <person name="Pignol D."/>
            <person name="Stacey G."/>
            <person name="Emerich D."/>
            <person name="Vermeglio A."/>
            <person name="Medigue C."/>
            <person name="Sadowsky M."/>
        </authorList>
    </citation>
    <scope>NUCLEOTIDE SEQUENCE [LARGE SCALE GENOMIC DNA]</scope>
    <source>
        <strain>BTAi1 / ATCC BAA-1182</strain>
    </source>
</reference>
<accession>A5E961</accession>
<evidence type="ECO:0000255" key="1">
    <source>
        <dbReference type="HAMAP-Rule" id="MF_00412"/>
    </source>
</evidence>
<protein>
    <recommendedName>
        <fullName evidence="1">Gamma-glutamyl phosphate reductase</fullName>
        <shortName evidence="1">GPR</shortName>
        <ecNumber evidence="1">1.2.1.41</ecNumber>
    </recommendedName>
    <alternativeName>
        <fullName evidence="1">Glutamate-5-semialdehyde dehydrogenase</fullName>
    </alternativeName>
    <alternativeName>
        <fullName evidence="1">Glutamyl-gamma-semialdehyde dehydrogenase</fullName>
        <shortName evidence="1">GSA dehydrogenase</shortName>
    </alternativeName>
</protein>
<gene>
    <name evidence="1" type="primary">proA</name>
    <name type="ordered locus">BBta_0419</name>
</gene>
<proteinExistence type="inferred from homology"/>